<geneLocation type="chloroplast"/>
<sequence>MTQTNPNEQSVELNRTSLYWGLLLIFVLAVLFSNYFFN</sequence>
<keyword id="KW-0150">Chloroplast</keyword>
<keyword id="KW-0472">Membrane</keyword>
<keyword id="KW-0602">Photosynthesis</keyword>
<keyword id="KW-0604">Photosystem II</keyword>
<keyword id="KW-0934">Plastid</keyword>
<keyword id="KW-0674">Reaction center</keyword>
<keyword id="KW-0793">Thylakoid</keyword>
<keyword id="KW-0812">Transmembrane</keyword>
<keyword id="KW-1133">Transmembrane helix</keyword>
<reference key="1">
    <citation type="journal article" date="2003" name="Mol. Phylogenet. Evol.">
        <title>Inference of higher-order relationships in the cycads from a large chloroplast data set.</title>
        <authorList>
            <person name="Rai H.S."/>
            <person name="O'Brien H.E."/>
            <person name="Reeves P.A."/>
            <person name="Olmstead R.G."/>
            <person name="Graham S.W."/>
        </authorList>
    </citation>
    <scope>NUCLEOTIDE SEQUENCE [GENOMIC DNA]</scope>
</reference>
<reference key="2">
    <citation type="journal article" date="2008" name="BMC Evol. Biol.">
        <title>The complete plastid genome sequence of Welwitschia mirabilis: an unusually compact plastome with accelerated divergence rates.</title>
        <authorList>
            <person name="McCoy S.R."/>
            <person name="Kuehl J.V."/>
            <person name="Boore J.L."/>
            <person name="Raubeson L.A."/>
        </authorList>
    </citation>
    <scope>NUCLEOTIDE SEQUENCE [LARGE SCALE GENOMIC DNA]</scope>
</reference>
<reference key="3">
    <citation type="journal article" date="2009" name="Mol. Phylogenet. Evol.">
        <title>Evolution of reduced and compact chloroplast genomes (cpDNAs) in gnetophytes: Selection toward a lower-cost strategy.</title>
        <authorList>
            <person name="Wu C.-S."/>
            <person name="Lai Y.-T."/>
            <person name="Lin C.-P."/>
            <person name="Wang Y.-N."/>
            <person name="Chaw S.-M."/>
        </authorList>
    </citation>
    <scope>NUCLEOTIDE SEQUENCE [LARGE SCALE GENOMIC DNA]</scope>
</reference>
<comment type="function">
    <text evidence="1">One of the components of the core complex of photosystem II (PSII). PSII is a light-driven water:plastoquinone oxidoreductase that uses light energy to abstract electrons from H(2)O, generating O(2) and a proton gradient subsequently used for ATP formation. It consists of a core antenna complex that captures photons, and an electron transfer chain that converts photonic excitation into a charge separation. This subunit is found at the monomer-monomer interface and is required for correct PSII assembly and/or dimerization.</text>
</comment>
<comment type="subunit">
    <text evidence="1">PSII is composed of 1 copy each of membrane proteins PsbA, PsbB, PsbC, PsbD, PsbE, PsbF, PsbH, PsbI, PsbJ, PsbK, PsbL, PsbM, PsbT, PsbX, PsbY, PsbZ, Psb30/Ycf12, at least 3 peripheral proteins of the oxygen-evolving complex and a large number of cofactors. It forms dimeric complexes.</text>
</comment>
<comment type="subcellular location">
    <subcellularLocation>
        <location evidence="1">Plastid</location>
        <location evidence="1">Chloroplast thylakoid membrane</location>
        <topology evidence="1">Single-pass membrane protein</topology>
    </subcellularLocation>
</comment>
<comment type="similarity">
    <text evidence="1">Belongs to the PsbL family.</text>
</comment>
<evidence type="ECO:0000255" key="1">
    <source>
        <dbReference type="HAMAP-Rule" id="MF_01317"/>
    </source>
</evidence>
<gene>
    <name evidence="1" type="primary">psbL</name>
</gene>
<dbReference type="EMBL" id="AY116660">
    <property type="protein sequence ID" value="AAN07080.1"/>
    <property type="molecule type" value="Genomic_DNA"/>
</dbReference>
<dbReference type="EMBL" id="EU342371">
    <property type="protein sequence ID" value="ABY26804.1"/>
    <property type="molecule type" value="Genomic_DNA"/>
</dbReference>
<dbReference type="EMBL" id="AP009568">
    <property type="protein sequence ID" value="BAH11214.1"/>
    <property type="molecule type" value="Genomic_DNA"/>
</dbReference>
<dbReference type="RefSeq" id="YP_001876591.1">
    <property type="nucleotide sequence ID" value="NC_010654.1"/>
</dbReference>
<dbReference type="SMR" id="Q6YLT3"/>
<dbReference type="GeneID" id="6276216"/>
<dbReference type="GO" id="GO:0009535">
    <property type="term" value="C:chloroplast thylakoid membrane"/>
    <property type="evidence" value="ECO:0007669"/>
    <property type="project" value="UniProtKB-SubCell"/>
</dbReference>
<dbReference type="GO" id="GO:0009539">
    <property type="term" value="C:photosystem II reaction center"/>
    <property type="evidence" value="ECO:0007669"/>
    <property type="project" value="InterPro"/>
</dbReference>
<dbReference type="GO" id="GO:0015979">
    <property type="term" value="P:photosynthesis"/>
    <property type="evidence" value="ECO:0007669"/>
    <property type="project" value="UniProtKB-UniRule"/>
</dbReference>
<dbReference type="HAMAP" id="MF_01317">
    <property type="entry name" value="PSII_PsbL"/>
    <property type="match status" value="1"/>
</dbReference>
<dbReference type="InterPro" id="IPR003372">
    <property type="entry name" value="PSII_PsbL"/>
</dbReference>
<dbReference type="InterPro" id="IPR037266">
    <property type="entry name" value="PSII_PsbL_sf"/>
</dbReference>
<dbReference type="NCBIfam" id="NF001972">
    <property type="entry name" value="PRK00753.1"/>
    <property type="match status" value="1"/>
</dbReference>
<dbReference type="Pfam" id="PF02419">
    <property type="entry name" value="PsbL"/>
    <property type="match status" value="1"/>
</dbReference>
<dbReference type="SUPFAM" id="SSF161017">
    <property type="entry name" value="Photosystem II reaction center protein L, PsbL"/>
    <property type="match status" value="1"/>
</dbReference>
<protein>
    <recommendedName>
        <fullName evidence="1">Photosystem II reaction center protein L</fullName>
        <shortName evidence="1">PSII-L</shortName>
    </recommendedName>
</protein>
<organism>
    <name type="scientific">Welwitschia mirabilis</name>
    <name type="common">Tree tumbo</name>
    <name type="synonym">Welwitschia bainesii</name>
    <dbReference type="NCBI Taxonomy" id="3377"/>
    <lineage>
        <taxon>Eukaryota</taxon>
        <taxon>Viridiplantae</taxon>
        <taxon>Streptophyta</taxon>
        <taxon>Embryophyta</taxon>
        <taxon>Tracheophyta</taxon>
        <taxon>Spermatophyta</taxon>
        <taxon>Gnetopsida</taxon>
        <taxon>Gnetidae</taxon>
        <taxon>Welwitschiales</taxon>
        <taxon>Welwitschiaceae</taxon>
        <taxon>Welwitschia</taxon>
    </lineage>
</organism>
<accession>Q6YLT3</accession>
<accession>B2Y1X4</accession>
<accession>B7ZI34</accession>
<feature type="chain" id="PRO_0000219781" description="Photosystem II reaction center protein L">
    <location>
        <begin position="1"/>
        <end position="38"/>
    </location>
</feature>
<feature type="transmembrane region" description="Helical" evidence="1">
    <location>
        <begin position="17"/>
        <end position="37"/>
    </location>
</feature>
<name>PSBL_WELMI</name>
<proteinExistence type="inferred from homology"/>